<gene>
    <name evidence="1" type="primary">nuoK</name>
    <name type="ordered locus">Mvan_1875</name>
</gene>
<protein>
    <recommendedName>
        <fullName evidence="1">NADH-quinone oxidoreductase subunit K</fullName>
        <ecNumber evidence="1">7.1.1.-</ecNumber>
    </recommendedName>
    <alternativeName>
        <fullName evidence="1">NADH dehydrogenase I subunit K</fullName>
    </alternativeName>
    <alternativeName>
        <fullName evidence="1">NDH-1 subunit K</fullName>
    </alternativeName>
</protein>
<name>NUOK_MYCVP</name>
<comment type="function">
    <text evidence="1">NDH-1 shuttles electrons from NADH, via FMN and iron-sulfur (Fe-S) centers, to quinones in the respiratory chain. The immediate electron acceptor for the enzyme in this species is believed to be a menaquinone. Couples the redox reaction to proton translocation (for every two electrons transferred, four hydrogen ions are translocated across the cytoplasmic membrane), and thus conserves the redox energy in a proton gradient.</text>
</comment>
<comment type="catalytic activity">
    <reaction evidence="1">
        <text>a quinone + NADH + 5 H(+)(in) = a quinol + NAD(+) + 4 H(+)(out)</text>
        <dbReference type="Rhea" id="RHEA:57888"/>
        <dbReference type="ChEBI" id="CHEBI:15378"/>
        <dbReference type="ChEBI" id="CHEBI:24646"/>
        <dbReference type="ChEBI" id="CHEBI:57540"/>
        <dbReference type="ChEBI" id="CHEBI:57945"/>
        <dbReference type="ChEBI" id="CHEBI:132124"/>
    </reaction>
</comment>
<comment type="subunit">
    <text evidence="1">NDH-1 is composed of 14 different subunits. Subunits NuoA, H, J, K, L, M, N constitute the membrane sector of the complex.</text>
</comment>
<comment type="subcellular location">
    <subcellularLocation>
        <location evidence="1">Cell membrane</location>
        <topology evidence="1">Multi-pass membrane protein</topology>
    </subcellularLocation>
</comment>
<comment type="similarity">
    <text evidence="1">Belongs to the complex I subunit 4L family.</text>
</comment>
<proteinExistence type="inferred from homology"/>
<organism>
    <name type="scientific">Mycolicibacterium vanbaalenii (strain DSM 7251 / JCM 13017 / BCRC 16820 / KCTC 9966 / NRRL B-24157 / PYR-1)</name>
    <name type="common">Mycobacterium vanbaalenii</name>
    <dbReference type="NCBI Taxonomy" id="350058"/>
    <lineage>
        <taxon>Bacteria</taxon>
        <taxon>Bacillati</taxon>
        <taxon>Actinomycetota</taxon>
        <taxon>Actinomycetes</taxon>
        <taxon>Mycobacteriales</taxon>
        <taxon>Mycobacteriaceae</taxon>
        <taxon>Mycolicibacterium</taxon>
    </lineage>
</organism>
<dbReference type="EC" id="7.1.1.-" evidence="1"/>
<dbReference type="EMBL" id="CP000511">
    <property type="protein sequence ID" value="ABM12696.1"/>
    <property type="molecule type" value="Genomic_DNA"/>
</dbReference>
<dbReference type="RefSeq" id="WP_011779114.1">
    <property type="nucleotide sequence ID" value="NZ_JACKSD010000325.1"/>
</dbReference>
<dbReference type="SMR" id="A1T696"/>
<dbReference type="STRING" id="350058.Mvan_1875"/>
<dbReference type="KEGG" id="mva:Mvan_1875"/>
<dbReference type="eggNOG" id="COG0713">
    <property type="taxonomic scope" value="Bacteria"/>
</dbReference>
<dbReference type="HOGENOM" id="CLU_144724_0_0_11"/>
<dbReference type="Proteomes" id="UP000009159">
    <property type="component" value="Chromosome"/>
</dbReference>
<dbReference type="GO" id="GO:0030964">
    <property type="term" value="C:NADH dehydrogenase complex"/>
    <property type="evidence" value="ECO:0007669"/>
    <property type="project" value="TreeGrafter"/>
</dbReference>
<dbReference type="GO" id="GO:0005886">
    <property type="term" value="C:plasma membrane"/>
    <property type="evidence" value="ECO:0007669"/>
    <property type="project" value="UniProtKB-SubCell"/>
</dbReference>
<dbReference type="GO" id="GO:0050136">
    <property type="term" value="F:NADH:ubiquinone reductase (non-electrogenic) activity"/>
    <property type="evidence" value="ECO:0007669"/>
    <property type="project" value="UniProtKB-UniRule"/>
</dbReference>
<dbReference type="GO" id="GO:0048038">
    <property type="term" value="F:quinone binding"/>
    <property type="evidence" value="ECO:0007669"/>
    <property type="project" value="UniProtKB-KW"/>
</dbReference>
<dbReference type="GO" id="GO:0042773">
    <property type="term" value="P:ATP synthesis coupled electron transport"/>
    <property type="evidence" value="ECO:0007669"/>
    <property type="project" value="InterPro"/>
</dbReference>
<dbReference type="FunFam" id="1.10.287.3510:FF:000001">
    <property type="entry name" value="NADH-quinone oxidoreductase subunit K"/>
    <property type="match status" value="1"/>
</dbReference>
<dbReference type="Gene3D" id="1.10.287.3510">
    <property type="match status" value="1"/>
</dbReference>
<dbReference type="HAMAP" id="MF_01456">
    <property type="entry name" value="NDH1_NuoK"/>
    <property type="match status" value="1"/>
</dbReference>
<dbReference type="InterPro" id="IPR001133">
    <property type="entry name" value="NADH_UbQ_OxRdtase_chain4L/K"/>
</dbReference>
<dbReference type="InterPro" id="IPR039428">
    <property type="entry name" value="NUOK/Mnh_C1-like"/>
</dbReference>
<dbReference type="NCBIfam" id="NF004320">
    <property type="entry name" value="PRK05715.1-2"/>
    <property type="match status" value="1"/>
</dbReference>
<dbReference type="PANTHER" id="PTHR11434:SF21">
    <property type="entry name" value="NADH DEHYDROGENASE SUBUNIT 4L-RELATED"/>
    <property type="match status" value="1"/>
</dbReference>
<dbReference type="PANTHER" id="PTHR11434">
    <property type="entry name" value="NADH-UBIQUINONE OXIDOREDUCTASE SUBUNIT ND4L"/>
    <property type="match status" value="1"/>
</dbReference>
<dbReference type="Pfam" id="PF00420">
    <property type="entry name" value="Oxidored_q2"/>
    <property type="match status" value="1"/>
</dbReference>
<feature type="chain" id="PRO_0000390137" description="NADH-quinone oxidoreductase subunit K">
    <location>
        <begin position="1"/>
        <end position="99"/>
    </location>
</feature>
<feature type="transmembrane region" description="Helical" evidence="1">
    <location>
        <begin position="3"/>
        <end position="23"/>
    </location>
</feature>
<feature type="transmembrane region" description="Helical" evidence="1">
    <location>
        <begin position="28"/>
        <end position="48"/>
    </location>
</feature>
<feature type="transmembrane region" description="Helical" evidence="1">
    <location>
        <begin position="59"/>
        <end position="79"/>
    </location>
</feature>
<accession>A1T696</accession>
<evidence type="ECO:0000255" key="1">
    <source>
        <dbReference type="HAMAP-Rule" id="MF_01456"/>
    </source>
</evidence>
<reference key="1">
    <citation type="submission" date="2006-12" db="EMBL/GenBank/DDBJ databases">
        <title>Complete sequence of Mycobacterium vanbaalenii PYR-1.</title>
        <authorList>
            <consortium name="US DOE Joint Genome Institute"/>
            <person name="Copeland A."/>
            <person name="Lucas S."/>
            <person name="Lapidus A."/>
            <person name="Barry K."/>
            <person name="Detter J.C."/>
            <person name="Glavina del Rio T."/>
            <person name="Hammon N."/>
            <person name="Israni S."/>
            <person name="Dalin E."/>
            <person name="Tice H."/>
            <person name="Pitluck S."/>
            <person name="Singan V."/>
            <person name="Schmutz J."/>
            <person name="Larimer F."/>
            <person name="Land M."/>
            <person name="Hauser L."/>
            <person name="Kyrpides N."/>
            <person name="Anderson I.J."/>
            <person name="Miller C."/>
            <person name="Richardson P."/>
        </authorList>
    </citation>
    <scope>NUCLEOTIDE SEQUENCE [LARGE SCALE GENOMIC DNA]</scope>
    <source>
        <strain>DSM 7251 / JCM 13017 / BCRC 16820 / KCTC 9966 / NRRL B-24157 / PYR-1</strain>
    </source>
</reference>
<sequence length="99" mass="10833">MSPDNYLYLSALLFTIGAAGVLLRRNAIVMFMCIELMLNAANLAFVTFSRIHGHLDGQVVAFFTMVVAACEVVIGLAIITMIFRTRRSASVDAANLLKH</sequence>
<keyword id="KW-1003">Cell membrane</keyword>
<keyword id="KW-0472">Membrane</keyword>
<keyword id="KW-0520">NAD</keyword>
<keyword id="KW-0874">Quinone</keyword>
<keyword id="KW-1278">Translocase</keyword>
<keyword id="KW-0812">Transmembrane</keyword>
<keyword id="KW-1133">Transmembrane helix</keyword>
<keyword id="KW-0813">Transport</keyword>